<name>ILVD_BACCZ</name>
<protein>
    <recommendedName>
        <fullName evidence="1">Dihydroxy-acid dehydratase</fullName>
        <shortName evidence="1">DAD</shortName>
        <ecNumber evidence="1">4.2.1.9</ecNumber>
    </recommendedName>
</protein>
<proteinExistence type="inferred from homology"/>
<gene>
    <name evidence="1" type="primary">ilvD</name>
    <name type="ordered locus">BCE33L1669</name>
</gene>
<evidence type="ECO:0000255" key="1">
    <source>
        <dbReference type="HAMAP-Rule" id="MF_00012"/>
    </source>
</evidence>
<sequence>MRSDMIKKGFDKAPHRSLLKATGLKDEDFDKPFIAICNSFIEIIPGHKHLNEFGKLVKEAVRAAGMVPFEFNTIGVDDGIAMGHIGMRYSLPSREIIADSVETVVNAHWFDGMICIPNCDKITPGMMMAALRINIPTVFVSGGPMAAGKTSKGEVVDLSSVFEGVGAYQSGKISEEELKDIEDHGCPSCGSCSGMFTANSMNCLCEVLGLALPGNGSILAIDPRREELIKEAAEKLKILIERDIKPRDIVTEEAIDDAFALDMAMGGSTNTVLHTLALAHEAGLDYDMSRIDAVSRRVPHLCKVSPASNWHMEDIDRAGGISAILKEMSRKEGVLHLDRITATGQTLRGNIAHAEIKDKEVIHSLENPHSEEGGLRILKGNLAKDGAVIKSGATEVKRFEGPCVIFNSQDEALAGIMLGKVKKGDVVVIRYEGPRGGPGMPEMLAPTSAIAGMGLGADVALLTDGRFSGASRGISVGHISPEAAAGGTIALLEQGDIVCIDVEERLLEVRVSDEELDKRKKEWKRPEPKVKTGWLGRYAQMVTSANTGAVLKVPNFD</sequence>
<feature type="chain" id="PRO_0000225367" description="Dihydroxy-acid dehydratase">
    <location>
        <begin position="1"/>
        <end position="557"/>
    </location>
</feature>
<feature type="active site" description="Proton acceptor" evidence="1">
    <location>
        <position position="468"/>
    </location>
</feature>
<feature type="binding site" evidence="1">
    <location>
        <position position="78"/>
    </location>
    <ligand>
        <name>Mg(2+)</name>
        <dbReference type="ChEBI" id="CHEBI:18420"/>
    </ligand>
</feature>
<feature type="binding site" evidence="1">
    <location>
        <position position="119"/>
    </location>
    <ligand>
        <name>[2Fe-2S] cluster</name>
        <dbReference type="ChEBI" id="CHEBI:190135"/>
    </ligand>
</feature>
<feature type="binding site" evidence="1">
    <location>
        <position position="120"/>
    </location>
    <ligand>
        <name>Mg(2+)</name>
        <dbReference type="ChEBI" id="CHEBI:18420"/>
    </ligand>
</feature>
<feature type="binding site" description="via carbamate group" evidence="1">
    <location>
        <position position="121"/>
    </location>
    <ligand>
        <name>Mg(2+)</name>
        <dbReference type="ChEBI" id="CHEBI:18420"/>
    </ligand>
</feature>
<feature type="binding site" evidence="1">
    <location>
        <position position="192"/>
    </location>
    <ligand>
        <name>[2Fe-2S] cluster</name>
        <dbReference type="ChEBI" id="CHEBI:190135"/>
    </ligand>
</feature>
<feature type="binding site" evidence="1">
    <location>
        <position position="442"/>
    </location>
    <ligand>
        <name>Mg(2+)</name>
        <dbReference type="ChEBI" id="CHEBI:18420"/>
    </ligand>
</feature>
<feature type="modified residue" description="N6-carboxylysine" evidence="1">
    <location>
        <position position="121"/>
    </location>
</feature>
<keyword id="KW-0001">2Fe-2S</keyword>
<keyword id="KW-0028">Amino-acid biosynthesis</keyword>
<keyword id="KW-0100">Branched-chain amino acid biosynthesis</keyword>
<keyword id="KW-0408">Iron</keyword>
<keyword id="KW-0411">Iron-sulfur</keyword>
<keyword id="KW-0456">Lyase</keyword>
<keyword id="KW-0460">Magnesium</keyword>
<keyword id="KW-0479">Metal-binding</keyword>
<dbReference type="EC" id="4.2.1.9" evidence="1"/>
<dbReference type="EMBL" id="CP000001">
    <property type="protein sequence ID" value="AAU18584.1"/>
    <property type="molecule type" value="Genomic_DNA"/>
</dbReference>
<dbReference type="RefSeq" id="WP_001255806.1">
    <property type="nucleotide sequence ID" value="NC_006274.1"/>
</dbReference>
<dbReference type="SMR" id="Q63CV3"/>
<dbReference type="KEGG" id="bcz:BCE33L1669"/>
<dbReference type="PATRIC" id="fig|288681.22.peg.3873"/>
<dbReference type="UniPathway" id="UPA00047">
    <property type="reaction ID" value="UER00057"/>
</dbReference>
<dbReference type="UniPathway" id="UPA00049">
    <property type="reaction ID" value="UER00061"/>
</dbReference>
<dbReference type="Proteomes" id="UP000002612">
    <property type="component" value="Chromosome"/>
</dbReference>
<dbReference type="GO" id="GO:0005829">
    <property type="term" value="C:cytosol"/>
    <property type="evidence" value="ECO:0007669"/>
    <property type="project" value="TreeGrafter"/>
</dbReference>
<dbReference type="GO" id="GO:0051537">
    <property type="term" value="F:2 iron, 2 sulfur cluster binding"/>
    <property type="evidence" value="ECO:0007669"/>
    <property type="project" value="UniProtKB-UniRule"/>
</dbReference>
<dbReference type="GO" id="GO:0004160">
    <property type="term" value="F:dihydroxy-acid dehydratase activity"/>
    <property type="evidence" value="ECO:0007669"/>
    <property type="project" value="UniProtKB-UniRule"/>
</dbReference>
<dbReference type="GO" id="GO:0000287">
    <property type="term" value="F:magnesium ion binding"/>
    <property type="evidence" value="ECO:0007669"/>
    <property type="project" value="UniProtKB-UniRule"/>
</dbReference>
<dbReference type="GO" id="GO:0009097">
    <property type="term" value="P:isoleucine biosynthetic process"/>
    <property type="evidence" value="ECO:0007669"/>
    <property type="project" value="UniProtKB-UniRule"/>
</dbReference>
<dbReference type="GO" id="GO:0009099">
    <property type="term" value="P:L-valine biosynthetic process"/>
    <property type="evidence" value="ECO:0007669"/>
    <property type="project" value="UniProtKB-UniRule"/>
</dbReference>
<dbReference type="FunFam" id="3.50.30.80:FF:000001">
    <property type="entry name" value="Dihydroxy-acid dehydratase"/>
    <property type="match status" value="1"/>
</dbReference>
<dbReference type="Gene3D" id="3.50.30.80">
    <property type="entry name" value="IlvD/EDD C-terminal domain-like"/>
    <property type="match status" value="1"/>
</dbReference>
<dbReference type="HAMAP" id="MF_00012">
    <property type="entry name" value="IlvD"/>
    <property type="match status" value="1"/>
</dbReference>
<dbReference type="InterPro" id="IPR042096">
    <property type="entry name" value="Dihydro-acid_dehy_C"/>
</dbReference>
<dbReference type="InterPro" id="IPR004404">
    <property type="entry name" value="DihydroxyA_deHydtase"/>
</dbReference>
<dbReference type="InterPro" id="IPR020558">
    <property type="entry name" value="DiOHA_6PGluconate_deHydtase_CS"/>
</dbReference>
<dbReference type="InterPro" id="IPR056740">
    <property type="entry name" value="ILV_EDD_C"/>
</dbReference>
<dbReference type="InterPro" id="IPR000581">
    <property type="entry name" value="ILV_EDD_N"/>
</dbReference>
<dbReference type="InterPro" id="IPR037237">
    <property type="entry name" value="IlvD/EDD_N"/>
</dbReference>
<dbReference type="NCBIfam" id="TIGR00110">
    <property type="entry name" value="ilvD"/>
    <property type="match status" value="1"/>
</dbReference>
<dbReference type="NCBIfam" id="NF002068">
    <property type="entry name" value="PRK00911.1"/>
    <property type="match status" value="1"/>
</dbReference>
<dbReference type="PANTHER" id="PTHR43661">
    <property type="entry name" value="D-XYLONATE DEHYDRATASE"/>
    <property type="match status" value="1"/>
</dbReference>
<dbReference type="PANTHER" id="PTHR43661:SF3">
    <property type="entry name" value="D-XYLONATE DEHYDRATASE YAGF-RELATED"/>
    <property type="match status" value="1"/>
</dbReference>
<dbReference type="Pfam" id="PF24877">
    <property type="entry name" value="ILV_EDD_C"/>
    <property type="match status" value="1"/>
</dbReference>
<dbReference type="Pfam" id="PF00920">
    <property type="entry name" value="ILVD_EDD_N"/>
    <property type="match status" value="1"/>
</dbReference>
<dbReference type="SUPFAM" id="SSF143975">
    <property type="entry name" value="IlvD/EDD N-terminal domain-like"/>
    <property type="match status" value="1"/>
</dbReference>
<dbReference type="SUPFAM" id="SSF52016">
    <property type="entry name" value="LeuD/IlvD-like"/>
    <property type="match status" value="1"/>
</dbReference>
<dbReference type="PROSITE" id="PS00886">
    <property type="entry name" value="ILVD_EDD_1"/>
    <property type="match status" value="1"/>
</dbReference>
<dbReference type="PROSITE" id="PS00887">
    <property type="entry name" value="ILVD_EDD_2"/>
    <property type="match status" value="1"/>
</dbReference>
<reference key="1">
    <citation type="journal article" date="2006" name="J. Bacteriol.">
        <title>Pathogenomic sequence analysis of Bacillus cereus and Bacillus thuringiensis isolates closely related to Bacillus anthracis.</title>
        <authorList>
            <person name="Han C.S."/>
            <person name="Xie G."/>
            <person name="Challacombe J.F."/>
            <person name="Altherr M.R."/>
            <person name="Bhotika S.S."/>
            <person name="Bruce D."/>
            <person name="Campbell C.S."/>
            <person name="Campbell M.L."/>
            <person name="Chen J."/>
            <person name="Chertkov O."/>
            <person name="Cleland C."/>
            <person name="Dimitrijevic M."/>
            <person name="Doggett N.A."/>
            <person name="Fawcett J.J."/>
            <person name="Glavina T."/>
            <person name="Goodwin L.A."/>
            <person name="Hill K.K."/>
            <person name="Hitchcock P."/>
            <person name="Jackson P.J."/>
            <person name="Keim P."/>
            <person name="Kewalramani A.R."/>
            <person name="Longmire J."/>
            <person name="Lucas S."/>
            <person name="Malfatti S."/>
            <person name="McMurry K."/>
            <person name="Meincke L.J."/>
            <person name="Misra M."/>
            <person name="Moseman B.L."/>
            <person name="Mundt M."/>
            <person name="Munk A.C."/>
            <person name="Okinaka R.T."/>
            <person name="Parson-Quintana B."/>
            <person name="Reilly L.P."/>
            <person name="Richardson P."/>
            <person name="Robinson D.L."/>
            <person name="Rubin E."/>
            <person name="Saunders E."/>
            <person name="Tapia R."/>
            <person name="Tesmer J.G."/>
            <person name="Thayer N."/>
            <person name="Thompson L.S."/>
            <person name="Tice H."/>
            <person name="Ticknor L.O."/>
            <person name="Wills P.L."/>
            <person name="Brettin T.S."/>
            <person name="Gilna P."/>
        </authorList>
    </citation>
    <scope>NUCLEOTIDE SEQUENCE [LARGE SCALE GENOMIC DNA]</scope>
    <source>
        <strain>ZK / E33L</strain>
    </source>
</reference>
<organism>
    <name type="scientific">Bacillus cereus (strain ZK / E33L)</name>
    <dbReference type="NCBI Taxonomy" id="288681"/>
    <lineage>
        <taxon>Bacteria</taxon>
        <taxon>Bacillati</taxon>
        <taxon>Bacillota</taxon>
        <taxon>Bacilli</taxon>
        <taxon>Bacillales</taxon>
        <taxon>Bacillaceae</taxon>
        <taxon>Bacillus</taxon>
        <taxon>Bacillus cereus group</taxon>
    </lineage>
</organism>
<accession>Q63CV3</accession>
<comment type="function">
    <text evidence="1">Functions in the biosynthesis of branched-chain amino acids. Catalyzes the dehydration of (2R,3R)-2,3-dihydroxy-3-methylpentanoate (2,3-dihydroxy-3-methylvalerate) into 2-oxo-3-methylpentanoate (2-oxo-3-methylvalerate) and of (2R)-2,3-dihydroxy-3-methylbutanoate (2,3-dihydroxyisovalerate) into 2-oxo-3-methylbutanoate (2-oxoisovalerate), the penultimate precursor to L-isoleucine and L-valine, respectively.</text>
</comment>
<comment type="catalytic activity">
    <reaction evidence="1">
        <text>(2R)-2,3-dihydroxy-3-methylbutanoate = 3-methyl-2-oxobutanoate + H2O</text>
        <dbReference type="Rhea" id="RHEA:24809"/>
        <dbReference type="ChEBI" id="CHEBI:11851"/>
        <dbReference type="ChEBI" id="CHEBI:15377"/>
        <dbReference type="ChEBI" id="CHEBI:49072"/>
        <dbReference type="EC" id="4.2.1.9"/>
    </reaction>
    <physiologicalReaction direction="left-to-right" evidence="1">
        <dbReference type="Rhea" id="RHEA:24810"/>
    </physiologicalReaction>
</comment>
<comment type="catalytic activity">
    <reaction evidence="1">
        <text>(2R,3R)-2,3-dihydroxy-3-methylpentanoate = (S)-3-methyl-2-oxopentanoate + H2O</text>
        <dbReference type="Rhea" id="RHEA:27694"/>
        <dbReference type="ChEBI" id="CHEBI:15377"/>
        <dbReference type="ChEBI" id="CHEBI:35146"/>
        <dbReference type="ChEBI" id="CHEBI:49258"/>
        <dbReference type="EC" id="4.2.1.9"/>
    </reaction>
    <physiologicalReaction direction="left-to-right" evidence="1">
        <dbReference type="Rhea" id="RHEA:27695"/>
    </physiologicalReaction>
</comment>
<comment type="cofactor">
    <cofactor evidence="1">
        <name>[2Fe-2S] cluster</name>
        <dbReference type="ChEBI" id="CHEBI:190135"/>
    </cofactor>
    <text evidence="1">Binds 1 [2Fe-2S] cluster per subunit. This cluster acts as a Lewis acid cofactor.</text>
</comment>
<comment type="cofactor">
    <cofactor evidence="1">
        <name>Mg(2+)</name>
        <dbReference type="ChEBI" id="CHEBI:18420"/>
    </cofactor>
</comment>
<comment type="pathway">
    <text evidence="1">Amino-acid biosynthesis; L-isoleucine biosynthesis; L-isoleucine from 2-oxobutanoate: step 3/4.</text>
</comment>
<comment type="pathway">
    <text evidence="1">Amino-acid biosynthesis; L-valine biosynthesis; L-valine from pyruvate: step 3/4.</text>
</comment>
<comment type="subunit">
    <text evidence="1">Homodimer.</text>
</comment>
<comment type="similarity">
    <text evidence="1">Belongs to the IlvD/Edd family.</text>
</comment>